<protein>
    <recommendedName>
        <fullName evidence="1">Phosphoribosylaminoimidazole-succinocarboxamide synthase</fullName>
        <ecNumber evidence="1">6.3.2.6</ecNumber>
    </recommendedName>
    <alternativeName>
        <fullName evidence="1">SAICAR synthetase</fullName>
    </alternativeName>
</protein>
<reference key="1">
    <citation type="journal article" date="2002" name="J. Bacteriol.">
        <title>Genome sequence and analysis of the oral bacterium Fusobacterium nucleatum strain ATCC 25586.</title>
        <authorList>
            <person name="Kapatral V."/>
            <person name="Anderson I."/>
            <person name="Ivanova N."/>
            <person name="Reznik G."/>
            <person name="Los T."/>
            <person name="Lykidis A."/>
            <person name="Bhattacharyya A."/>
            <person name="Bartman A."/>
            <person name="Gardner W."/>
            <person name="Grechkin G."/>
            <person name="Zhu L."/>
            <person name="Vasieva O."/>
            <person name="Chu L."/>
            <person name="Kogan Y."/>
            <person name="Chaga O."/>
            <person name="Goltsman E."/>
            <person name="Bernal A."/>
            <person name="Larsen N."/>
            <person name="D'Souza M."/>
            <person name="Walunas T."/>
            <person name="Pusch G."/>
            <person name="Haselkorn R."/>
            <person name="Fonstein M."/>
            <person name="Kyrpides N.C."/>
            <person name="Overbeek R."/>
        </authorList>
    </citation>
    <scope>NUCLEOTIDE SEQUENCE [LARGE SCALE GENOMIC DNA]</scope>
    <source>
        <strain>ATCC 25586 / DSM 15643 / BCRC 10681 / CIP 101130 / JCM 8532 / KCTC 2640 / LMG 13131 / VPI 4355</strain>
    </source>
</reference>
<accession>Q8REV1</accession>
<evidence type="ECO:0000255" key="1">
    <source>
        <dbReference type="HAMAP-Rule" id="MF_00137"/>
    </source>
</evidence>
<organism>
    <name type="scientific">Fusobacterium nucleatum subsp. nucleatum (strain ATCC 25586 / DSM 15643 / BCRC 10681 / CIP 101130 / JCM 8532 / KCTC 2640 / LMG 13131 / VPI 4355)</name>
    <dbReference type="NCBI Taxonomy" id="190304"/>
    <lineage>
        <taxon>Bacteria</taxon>
        <taxon>Fusobacteriati</taxon>
        <taxon>Fusobacteriota</taxon>
        <taxon>Fusobacteriia</taxon>
        <taxon>Fusobacteriales</taxon>
        <taxon>Fusobacteriaceae</taxon>
        <taxon>Fusobacterium</taxon>
    </lineage>
</organism>
<sequence>MEKGKFIYEGKAKQLYETDDKDLVIVHYKDDATAGNGAKKGTIHNKGIMNNEITALIFNMLEEHGIKTHFVKKLNDRDQLCQRVKIFPLEVIVRNIIAGSMAKRVGIKEGTKISNTIFEICYKNDEYGDPLINDHHAVAMGLATYDELKEIYDITGKINNLLKEKFDNIGITLVDFKIEFGKNSKGEILLADEITPDTCRLWDKKTGEKLDKDRFRRDLGNIEEAYIEVVKRLTEKK</sequence>
<feature type="chain" id="PRO_0000100829" description="Phosphoribosylaminoimidazole-succinocarboxamide synthase">
    <location>
        <begin position="1"/>
        <end position="237"/>
    </location>
</feature>
<comment type="catalytic activity">
    <reaction evidence="1">
        <text>5-amino-1-(5-phospho-D-ribosyl)imidazole-4-carboxylate + L-aspartate + ATP = (2S)-2-[5-amino-1-(5-phospho-beta-D-ribosyl)imidazole-4-carboxamido]succinate + ADP + phosphate + 2 H(+)</text>
        <dbReference type="Rhea" id="RHEA:22628"/>
        <dbReference type="ChEBI" id="CHEBI:15378"/>
        <dbReference type="ChEBI" id="CHEBI:29991"/>
        <dbReference type="ChEBI" id="CHEBI:30616"/>
        <dbReference type="ChEBI" id="CHEBI:43474"/>
        <dbReference type="ChEBI" id="CHEBI:58443"/>
        <dbReference type="ChEBI" id="CHEBI:77657"/>
        <dbReference type="ChEBI" id="CHEBI:456216"/>
        <dbReference type="EC" id="6.3.2.6"/>
    </reaction>
</comment>
<comment type="pathway">
    <text evidence="1">Purine metabolism; IMP biosynthesis via de novo pathway; 5-amino-1-(5-phospho-D-ribosyl)imidazole-4-carboxamide from 5-amino-1-(5-phospho-D-ribosyl)imidazole-4-carboxylate: step 1/2.</text>
</comment>
<comment type="similarity">
    <text evidence="1">Belongs to the SAICAR synthetase family.</text>
</comment>
<proteinExistence type="inferred from homology"/>
<name>PUR7_FUSNN</name>
<gene>
    <name evidence="1" type="primary">purC</name>
    <name type="ordered locus">FN0988</name>
</gene>
<dbReference type="EC" id="6.3.2.6" evidence="1"/>
<dbReference type="EMBL" id="AE009951">
    <property type="protein sequence ID" value="AAL95184.1"/>
    <property type="molecule type" value="Genomic_DNA"/>
</dbReference>
<dbReference type="RefSeq" id="NP_603885.1">
    <property type="nucleotide sequence ID" value="NC_003454.1"/>
</dbReference>
<dbReference type="RefSeq" id="WP_011016809.1">
    <property type="nucleotide sequence ID" value="NZ_CP028101.1"/>
</dbReference>
<dbReference type="SMR" id="Q8REV1"/>
<dbReference type="FunCoup" id="Q8REV1">
    <property type="interactions" value="315"/>
</dbReference>
<dbReference type="STRING" id="190304.FN0988"/>
<dbReference type="PaxDb" id="190304-FN0988"/>
<dbReference type="EnsemblBacteria" id="AAL95184">
    <property type="protein sequence ID" value="AAL95184"/>
    <property type="gene ID" value="FN0988"/>
</dbReference>
<dbReference type="GeneID" id="79783971"/>
<dbReference type="KEGG" id="fnu:FN0988"/>
<dbReference type="PATRIC" id="fig|190304.8.peg.1553"/>
<dbReference type="eggNOG" id="COG0152">
    <property type="taxonomic scope" value="Bacteria"/>
</dbReference>
<dbReference type="HOGENOM" id="CLU_061495_2_0_0"/>
<dbReference type="InParanoid" id="Q8REV1"/>
<dbReference type="BioCyc" id="FNUC190304:G1FZS-1570-MONOMER"/>
<dbReference type="UniPathway" id="UPA00074">
    <property type="reaction ID" value="UER00131"/>
</dbReference>
<dbReference type="Proteomes" id="UP000002521">
    <property type="component" value="Chromosome"/>
</dbReference>
<dbReference type="GO" id="GO:0005524">
    <property type="term" value="F:ATP binding"/>
    <property type="evidence" value="ECO:0007669"/>
    <property type="project" value="UniProtKB-KW"/>
</dbReference>
<dbReference type="GO" id="GO:0004639">
    <property type="term" value="F:phosphoribosylaminoimidazolesuccinocarboxamide synthase activity"/>
    <property type="evidence" value="ECO:0007669"/>
    <property type="project" value="UniProtKB-UniRule"/>
</dbReference>
<dbReference type="GO" id="GO:0006189">
    <property type="term" value="P:'de novo' IMP biosynthetic process"/>
    <property type="evidence" value="ECO:0007669"/>
    <property type="project" value="UniProtKB-UniRule"/>
</dbReference>
<dbReference type="GO" id="GO:0009236">
    <property type="term" value="P:cobalamin biosynthetic process"/>
    <property type="evidence" value="ECO:0007669"/>
    <property type="project" value="InterPro"/>
</dbReference>
<dbReference type="CDD" id="cd01415">
    <property type="entry name" value="SAICAR_synt_PurC"/>
    <property type="match status" value="1"/>
</dbReference>
<dbReference type="FunFam" id="3.30.200.20:FF:000189">
    <property type="entry name" value="Phosphoribosylaminoimidazole-succinocarboxamide synthase"/>
    <property type="match status" value="1"/>
</dbReference>
<dbReference type="FunFam" id="3.30.470.20:FF:000006">
    <property type="entry name" value="Phosphoribosylaminoimidazole-succinocarboxamide synthase"/>
    <property type="match status" value="1"/>
</dbReference>
<dbReference type="Gene3D" id="3.30.470.20">
    <property type="entry name" value="ATP-grasp fold, B domain"/>
    <property type="match status" value="1"/>
</dbReference>
<dbReference type="Gene3D" id="3.30.200.20">
    <property type="entry name" value="Phosphorylase Kinase, domain 1"/>
    <property type="match status" value="1"/>
</dbReference>
<dbReference type="HAMAP" id="MF_00137">
    <property type="entry name" value="SAICAR_synth"/>
    <property type="match status" value="1"/>
</dbReference>
<dbReference type="InterPro" id="IPR028923">
    <property type="entry name" value="SAICAR_synt/ADE2_N"/>
</dbReference>
<dbReference type="InterPro" id="IPR033934">
    <property type="entry name" value="SAICAR_synt_PurC"/>
</dbReference>
<dbReference type="InterPro" id="IPR001636">
    <property type="entry name" value="SAICAR_synth"/>
</dbReference>
<dbReference type="InterPro" id="IPR050089">
    <property type="entry name" value="SAICAR_synthetase"/>
</dbReference>
<dbReference type="InterPro" id="IPR018236">
    <property type="entry name" value="SAICAR_synthetase_CS"/>
</dbReference>
<dbReference type="NCBIfam" id="TIGR00081">
    <property type="entry name" value="purC"/>
    <property type="match status" value="1"/>
</dbReference>
<dbReference type="PANTHER" id="PTHR43599">
    <property type="entry name" value="MULTIFUNCTIONAL PROTEIN ADE2"/>
    <property type="match status" value="1"/>
</dbReference>
<dbReference type="PANTHER" id="PTHR43599:SF3">
    <property type="entry name" value="SI:DKEY-6E2.2"/>
    <property type="match status" value="1"/>
</dbReference>
<dbReference type="Pfam" id="PF01259">
    <property type="entry name" value="SAICAR_synt"/>
    <property type="match status" value="1"/>
</dbReference>
<dbReference type="SUPFAM" id="SSF56104">
    <property type="entry name" value="SAICAR synthase-like"/>
    <property type="match status" value="1"/>
</dbReference>
<dbReference type="PROSITE" id="PS01057">
    <property type="entry name" value="SAICAR_SYNTHETASE_1"/>
    <property type="match status" value="1"/>
</dbReference>
<dbReference type="PROSITE" id="PS01058">
    <property type="entry name" value="SAICAR_SYNTHETASE_2"/>
    <property type="match status" value="1"/>
</dbReference>
<keyword id="KW-0067">ATP-binding</keyword>
<keyword id="KW-0436">Ligase</keyword>
<keyword id="KW-0547">Nucleotide-binding</keyword>
<keyword id="KW-0658">Purine biosynthesis</keyword>
<keyword id="KW-1185">Reference proteome</keyword>